<gene>
    <name evidence="1" type="primary">ycgR</name>
    <name type="ordered locus">mma_1443</name>
</gene>
<protein>
    <recommendedName>
        <fullName evidence="1">Flagellar brake protein YcgR</fullName>
    </recommendedName>
    <alternativeName>
        <fullName evidence="1">Cyclic di-GMP binding protein YcgR</fullName>
    </alternativeName>
</protein>
<accession>A6SXY6</accession>
<dbReference type="EMBL" id="CP000269">
    <property type="protein sequence ID" value="ABR90520.1"/>
    <property type="molecule type" value="Genomic_DNA"/>
</dbReference>
<dbReference type="RefSeq" id="WP_012079299.1">
    <property type="nucleotide sequence ID" value="NC_009659.1"/>
</dbReference>
<dbReference type="SMR" id="A6SXY6"/>
<dbReference type="STRING" id="375286.mma_1443"/>
<dbReference type="KEGG" id="mms:mma_1443"/>
<dbReference type="eggNOG" id="COG5581">
    <property type="taxonomic scope" value="Bacteria"/>
</dbReference>
<dbReference type="HOGENOM" id="CLU_086025_0_0_4"/>
<dbReference type="OrthoDB" id="5572581at2"/>
<dbReference type="Proteomes" id="UP000006388">
    <property type="component" value="Chromosome"/>
</dbReference>
<dbReference type="GO" id="GO:0009425">
    <property type="term" value="C:bacterial-type flagellum basal body"/>
    <property type="evidence" value="ECO:0007669"/>
    <property type="project" value="UniProtKB-SubCell"/>
</dbReference>
<dbReference type="GO" id="GO:0035438">
    <property type="term" value="F:cyclic-di-GMP binding"/>
    <property type="evidence" value="ECO:0007669"/>
    <property type="project" value="UniProtKB-UniRule"/>
</dbReference>
<dbReference type="GO" id="GO:0071973">
    <property type="term" value="P:bacterial-type flagellum-dependent cell motility"/>
    <property type="evidence" value="ECO:0007669"/>
    <property type="project" value="UniProtKB-UniRule"/>
</dbReference>
<dbReference type="GO" id="GO:0071945">
    <property type="term" value="P:regulation of bacterial-type flagellum-dependent cell motility by regulation of motor speed"/>
    <property type="evidence" value="ECO:0007669"/>
    <property type="project" value="UniProtKB-UniRule"/>
</dbReference>
<dbReference type="Gene3D" id="2.30.110.10">
    <property type="entry name" value="Electron Transport, Fmn-binding Protein, Chain A"/>
    <property type="match status" value="1"/>
</dbReference>
<dbReference type="Gene3D" id="2.40.10.220">
    <property type="entry name" value="predicted glycosyltransferase like domains"/>
    <property type="match status" value="1"/>
</dbReference>
<dbReference type="HAMAP" id="MF_01457">
    <property type="entry name" value="YcgR"/>
    <property type="match status" value="1"/>
</dbReference>
<dbReference type="InterPro" id="IPR009875">
    <property type="entry name" value="PilZ_domain"/>
</dbReference>
<dbReference type="InterPro" id="IPR012349">
    <property type="entry name" value="Split_barrel_FMN-bd"/>
</dbReference>
<dbReference type="InterPro" id="IPR023787">
    <property type="entry name" value="T3SS_YcgR"/>
</dbReference>
<dbReference type="InterPro" id="IPR009926">
    <property type="entry name" value="T3SS_YcgR_PilZN"/>
</dbReference>
<dbReference type="Pfam" id="PF07238">
    <property type="entry name" value="PilZ"/>
    <property type="match status" value="1"/>
</dbReference>
<dbReference type="Pfam" id="PF07317">
    <property type="entry name" value="PilZN"/>
    <property type="match status" value="1"/>
</dbReference>
<keyword id="KW-0975">Bacterial flagellum</keyword>
<keyword id="KW-0973">c-di-GMP</keyword>
<keyword id="KW-0547">Nucleotide-binding</keyword>
<name>YCGR_JANMA</name>
<sequence length="252" mass="27728">MTLVSDHENDDMNPFRVRSRREVIALLRSIGERNQLVRMVINHGADTIVTSILNIDETNDTVLLDCAPTAIMNQRVLDSNKLSFETVLENIRILFNSPSAESCMYENLPAFVIPLPTSVVRLQRREFYRVPTPLTAPVSCTVPYTTEGVTIEVATTLHNISGGGVSLVDEKKLLSTTIGLTYQNCKIVLPGSGLITVALQVRNVLELTLTNGKSINRIGCEFINPSNGTLATVQKYITKIEREQNAKATGLG</sequence>
<comment type="function">
    <text evidence="1">Acts as a flagellar brake, regulating swimming and swarming in a bis-(3'-5') cyclic diguanylic acid (c-di-GMP)-dependent manner. Binds 1 c-di-GMP dimer per subunit. Increasing levels of c-di-GMP lead to decreased motility.</text>
</comment>
<comment type="subunit">
    <text evidence="1">Monomer. Interacts with the flagellar basal bodies.</text>
</comment>
<comment type="subcellular location">
    <subcellularLocation>
        <location evidence="1">Bacterial flagellum basal body</location>
    </subcellularLocation>
</comment>
<comment type="similarity">
    <text evidence="1">Belongs to the YcgR family.</text>
</comment>
<organism>
    <name type="scientific">Janthinobacterium sp. (strain Marseille)</name>
    <name type="common">Minibacterium massiliensis</name>
    <dbReference type="NCBI Taxonomy" id="375286"/>
    <lineage>
        <taxon>Bacteria</taxon>
        <taxon>Pseudomonadati</taxon>
        <taxon>Pseudomonadota</taxon>
        <taxon>Betaproteobacteria</taxon>
        <taxon>Burkholderiales</taxon>
        <taxon>Oxalobacteraceae</taxon>
        <taxon>Janthinobacterium</taxon>
    </lineage>
</organism>
<feature type="chain" id="PRO_0000395274" description="Flagellar brake protein YcgR">
    <location>
        <begin position="1"/>
        <end position="252"/>
    </location>
</feature>
<feature type="domain" description="PilZ" evidence="1">
    <location>
        <begin position="123"/>
        <end position="238"/>
    </location>
</feature>
<proteinExistence type="inferred from homology"/>
<evidence type="ECO:0000255" key="1">
    <source>
        <dbReference type="HAMAP-Rule" id="MF_01457"/>
    </source>
</evidence>
<reference key="1">
    <citation type="journal article" date="2007" name="PLoS Genet.">
        <title>Genome analysis of Minibacterium massiliensis highlights the convergent evolution of water-living bacteria.</title>
        <authorList>
            <person name="Audic S."/>
            <person name="Robert C."/>
            <person name="Campagna B."/>
            <person name="Parinello H."/>
            <person name="Claverie J.-M."/>
            <person name="Raoult D."/>
            <person name="Drancourt M."/>
        </authorList>
    </citation>
    <scope>NUCLEOTIDE SEQUENCE [LARGE SCALE GENOMIC DNA]</scope>
    <source>
        <strain>Marseille</strain>
    </source>
</reference>